<keyword id="KW-0064">Aspartyl protease</keyword>
<keyword id="KW-0997">Cell inner membrane</keyword>
<keyword id="KW-1003">Cell membrane</keyword>
<keyword id="KW-0378">Hydrolase</keyword>
<keyword id="KW-0472">Membrane</keyword>
<keyword id="KW-0645">Protease</keyword>
<keyword id="KW-1185">Reference proteome</keyword>
<keyword id="KW-0812">Transmembrane</keyword>
<keyword id="KW-1133">Transmembrane helix</keyword>
<reference key="1">
    <citation type="journal article" date="1998" name="Science">
        <title>Complete genome sequence of Treponema pallidum, the syphilis spirochete.</title>
        <authorList>
            <person name="Fraser C.M."/>
            <person name="Norris S.J."/>
            <person name="Weinstock G.M."/>
            <person name="White O."/>
            <person name="Sutton G.G."/>
            <person name="Dodson R.J."/>
            <person name="Gwinn M.L."/>
            <person name="Hickey E.K."/>
            <person name="Clayton R.A."/>
            <person name="Ketchum K.A."/>
            <person name="Sodergren E."/>
            <person name="Hardham J.M."/>
            <person name="McLeod M.P."/>
            <person name="Salzberg S.L."/>
            <person name="Peterson J.D."/>
            <person name="Khalak H.G."/>
            <person name="Richardson D.L."/>
            <person name="Howell J.K."/>
            <person name="Chidambaram M."/>
            <person name="Utterback T.R."/>
            <person name="McDonald L.A."/>
            <person name="Artiach P."/>
            <person name="Bowman C."/>
            <person name="Cotton M.D."/>
            <person name="Fujii C."/>
            <person name="Garland S.A."/>
            <person name="Hatch B."/>
            <person name="Horst K."/>
            <person name="Roberts K.M."/>
            <person name="Sandusky M."/>
            <person name="Weidman J.F."/>
            <person name="Smith H.O."/>
            <person name="Venter J.C."/>
        </authorList>
    </citation>
    <scope>NUCLEOTIDE SEQUENCE [LARGE SCALE GENOMIC DNA]</scope>
    <source>
        <strain>Nichols</strain>
    </source>
</reference>
<protein>
    <recommendedName>
        <fullName evidence="1">Lipoprotein signal peptidase</fullName>
        <ecNumber evidence="1">3.4.23.36</ecNumber>
    </recommendedName>
    <alternativeName>
        <fullName evidence="1">Prolipoprotein signal peptidase</fullName>
    </alternativeName>
    <alternativeName>
        <fullName evidence="1">Signal peptidase II</fullName>
        <shortName evidence="1">SPase II</shortName>
    </alternativeName>
</protein>
<comment type="function">
    <text evidence="1">This protein specifically catalyzes the removal of signal peptides from prolipoproteins.</text>
</comment>
<comment type="catalytic activity">
    <reaction evidence="1">
        <text>Release of signal peptides from bacterial membrane prolipoproteins. Hydrolyzes -Xaa-Yaa-Zaa-|-(S,diacylglyceryl)Cys-, in which Xaa is hydrophobic (preferably Leu), and Yaa (Ala or Ser) and Zaa (Gly or Ala) have small, neutral side chains.</text>
        <dbReference type="EC" id="3.4.23.36"/>
    </reaction>
</comment>
<comment type="pathway">
    <text evidence="1">Protein modification; lipoprotein biosynthesis (signal peptide cleavage).</text>
</comment>
<comment type="subcellular location">
    <subcellularLocation>
        <location evidence="1">Cell inner membrane</location>
        <topology evidence="1">Multi-pass membrane protein</topology>
    </subcellularLocation>
</comment>
<comment type="similarity">
    <text evidence="1 2">Belongs to the peptidase A8 family.</text>
</comment>
<comment type="sequence caution" evidence="2">
    <conflict type="erroneous initiation">
        <sequence resource="EMBL-CDS" id="AAC65933"/>
    </conflict>
</comment>
<proteinExistence type="inferred from homology"/>
<feature type="chain" id="PRO_0000178829" description="Lipoprotein signal peptidase">
    <location>
        <begin position="1"/>
        <end position="186"/>
    </location>
</feature>
<feature type="transmembrane region" description="Helical" evidence="1">
    <location>
        <begin position="11"/>
        <end position="31"/>
    </location>
</feature>
<feature type="transmembrane region" description="Helical" evidence="1">
    <location>
        <begin position="44"/>
        <end position="64"/>
    </location>
</feature>
<feature type="transmembrane region" description="Helical" evidence="1">
    <location>
        <begin position="70"/>
        <end position="90"/>
    </location>
</feature>
<feature type="transmembrane region" description="Helical" evidence="1">
    <location>
        <begin position="145"/>
        <end position="165"/>
    </location>
</feature>
<feature type="active site" evidence="1">
    <location>
        <position position="128"/>
    </location>
</feature>
<feature type="active site" evidence="1">
    <location>
        <position position="150"/>
    </location>
</feature>
<dbReference type="EC" id="3.4.23.36" evidence="1"/>
<dbReference type="EMBL" id="AE000520">
    <property type="protein sequence ID" value="AAC65933.1"/>
    <property type="status" value="ALT_INIT"/>
    <property type="molecule type" value="Genomic_DNA"/>
</dbReference>
<dbReference type="PIR" id="H71257">
    <property type="entry name" value="H71257"/>
</dbReference>
<dbReference type="SMR" id="O83943"/>
<dbReference type="IntAct" id="O83943">
    <property type="interactions" value="7"/>
</dbReference>
<dbReference type="STRING" id="243276.TP_0978"/>
<dbReference type="EnsemblBacteria" id="AAC65933">
    <property type="protein sequence ID" value="AAC65933"/>
    <property type="gene ID" value="TP_0978"/>
</dbReference>
<dbReference type="KEGG" id="tpa:TP_0978"/>
<dbReference type="eggNOG" id="COG0597">
    <property type="taxonomic scope" value="Bacteria"/>
</dbReference>
<dbReference type="HOGENOM" id="CLU_083252_3_1_12"/>
<dbReference type="UniPathway" id="UPA00665"/>
<dbReference type="Proteomes" id="UP000000811">
    <property type="component" value="Chromosome"/>
</dbReference>
<dbReference type="GO" id="GO:0005886">
    <property type="term" value="C:plasma membrane"/>
    <property type="evidence" value="ECO:0007669"/>
    <property type="project" value="UniProtKB-SubCell"/>
</dbReference>
<dbReference type="GO" id="GO:0004190">
    <property type="term" value="F:aspartic-type endopeptidase activity"/>
    <property type="evidence" value="ECO:0007669"/>
    <property type="project" value="UniProtKB-UniRule"/>
</dbReference>
<dbReference type="GO" id="GO:0006508">
    <property type="term" value="P:proteolysis"/>
    <property type="evidence" value="ECO:0007669"/>
    <property type="project" value="UniProtKB-KW"/>
</dbReference>
<dbReference type="HAMAP" id="MF_00161">
    <property type="entry name" value="LspA"/>
    <property type="match status" value="1"/>
</dbReference>
<dbReference type="InterPro" id="IPR001872">
    <property type="entry name" value="Peptidase_A8"/>
</dbReference>
<dbReference type="NCBIfam" id="TIGR00077">
    <property type="entry name" value="lspA"/>
    <property type="match status" value="1"/>
</dbReference>
<dbReference type="PANTHER" id="PTHR33695">
    <property type="entry name" value="LIPOPROTEIN SIGNAL PEPTIDASE"/>
    <property type="match status" value="1"/>
</dbReference>
<dbReference type="PANTHER" id="PTHR33695:SF1">
    <property type="entry name" value="LIPOPROTEIN SIGNAL PEPTIDASE"/>
    <property type="match status" value="1"/>
</dbReference>
<dbReference type="Pfam" id="PF01252">
    <property type="entry name" value="Peptidase_A8"/>
    <property type="match status" value="1"/>
</dbReference>
<dbReference type="PRINTS" id="PR00781">
    <property type="entry name" value="LIPOSIGPTASE"/>
</dbReference>
<dbReference type="PROSITE" id="PS00855">
    <property type="entry name" value="SPASE_II"/>
    <property type="match status" value="1"/>
</dbReference>
<accession>O83943</accession>
<sequence length="186" mass="20596">MKLTRIQKEKWIPLFAAGLVVVLDQCAKLLVGAYVPTNTSGVRVLGDFVRIVHVYNVGAAFSIGHQLNQVLRTLVLGIVPLIIMFLIVFSYFRTDAFCPVQRWAVSGIIGGGIGNLIDRFLRPNGVLDFIDVKFFGIFGFERWPAFNIADAVIMTCGLLLIISFIKQEKEISSQPSCNETGGVFRT</sequence>
<organism>
    <name type="scientific">Treponema pallidum (strain Nichols)</name>
    <dbReference type="NCBI Taxonomy" id="243276"/>
    <lineage>
        <taxon>Bacteria</taxon>
        <taxon>Pseudomonadati</taxon>
        <taxon>Spirochaetota</taxon>
        <taxon>Spirochaetia</taxon>
        <taxon>Spirochaetales</taxon>
        <taxon>Treponemataceae</taxon>
        <taxon>Treponema</taxon>
    </lineage>
</organism>
<gene>
    <name evidence="1" type="primary">lspA</name>
    <name type="synonym">lsp</name>
    <name type="ordered locus">TP_0978</name>
</gene>
<name>LSPA_TREPA</name>
<evidence type="ECO:0000255" key="1">
    <source>
        <dbReference type="HAMAP-Rule" id="MF_00161"/>
    </source>
</evidence>
<evidence type="ECO:0000305" key="2"/>